<reference key="1">
    <citation type="journal article" date="2014" name="New Phytol.">
        <title>Complex regulation of secondary metabolism controlling pathogenicity in the phytopathogenic fungus Alternaria alternata.</title>
        <authorList>
            <person name="Takaoka S."/>
            <person name="Kurata M."/>
            <person name="Harimoto Y."/>
            <person name="Hatta R."/>
            <person name="Yamamoto M."/>
            <person name="Akimitsu K."/>
            <person name="Tsuge T."/>
        </authorList>
    </citation>
    <scope>NUCLEOTIDE SEQUENCE [GENOMIC DNA]</scope>
    <scope>FUNCTION</scope>
    <scope>DISRUPTION PHENOTYPE</scope>
    <scope>PATHWAY</scope>
    <source>
        <strain>15A</strain>
    </source>
</reference>
<reference key="2">
    <citation type="journal article" date="1999" name="Mol. Plant Microbe Interact.">
        <title>Insertional mutagenesis and cloning of the genes required for biosynthesis of the host-specific AK-toxin in the Japanese pear pathotype of Alternaria alternata.</title>
        <authorList>
            <person name="Tanaka A."/>
            <person name="Shiotani H."/>
            <person name="Yamamoto M."/>
            <person name="Tsuge T."/>
        </authorList>
    </citation>
    <scope>FUNCTION</scope>
    <source>
        <strain>15A</strain>
    </source>
</reference>
<reference key="3">
    <citation type="journal article" date="2000" name="Mol. Plant Microbe Interact.">
        <title>Structural and functional complexity of the genomic region controlling AK-toxin biosynthesis and pathogenicity in the Japanese pear pathotype of Alternaria alternata.</title>
        <authorList>
            <person name="Tanaka A."/>
            <person name="Tsuge T."/>
        </authorList>
    </citation>
    <scope>FUNCTION</scope>
</reference>
<reference key="4">
    <citation type="journal article" date="2010" name="Eukaryot. Cell">
        <title>Contribution of peroxisomes to secondary metabolism and pathogenicity in the fungal plant pathogen Alternaria alternata.</title>
        <authorList>
            <person name="Imazaki A."/>
            <person name="Tanaka A."/>
            <person name="Harimoto Y."/>
            <person name="Yamamoto M."/>
            <person name="Akimitsu K."/>
            <person name="Park P."/>
            <person name="Tsuge T."/>
        </authorList>
    </citation>
    <scope>FUNCTION</scope>
</reference>
<reference key="5">
    <citation type="journal article" date="2013" name="FEMS Microbiol. Rev.">
        <title>Host-selective toxins produced by the plant pathogenic fungus Alternaria alternata.</title>
        <authorList>
            <person name="Tsuge T."/>
            <person name="Harimoto Y."/>
            <person name="Akimitsu K."/>
            <person name="Ohtani K."/>
            <person name="Kodama M."/>
            <person name="Akagi Y."/>
            <person name="Egusa M."/>
            <person name="Yamamoto M."/>
            <person name="Otani H."/>
        </authorList>
    </citation>
    <scope>REVIEW ON HOST-SELECTIVE TOXINS</scope>
</reference>
<name>AKT7_ALTAL</name>
<gene>
    <name evidence="8" type="primary">AKT7</name>
    <name evidence="8" type="synonym">AKT7-1</name>
</gene>
<sequence length="522" mass="58179">MKTTIDMQVLYVTCTVLAALILGYIQAMIIYRLWFHPLSKYPGPWLARISNLYSAYYAWSGDLHIDMWRCHQKYGDFVRYAPNRLLVNTNTGLKAIYGFNKHVQKSTTYNVMVHRAPSSLTMTDPQESAQRRRIVGQGFSSTAINQYESIIMEHVQRLATQLVRRGSDRGSGWSAAQNMSDWGNHFSFDVISDIVFGARHETIGKPDNRYVLGCIDGANIRTSVLFQAAELTFGRVDRYLFPKSIESRNRFTPFVSSLVRTRLQSHDASRNDAFSLLVRAKDPETSEGLSMDAIGGECTTLVMAGSDITSTVIASTLFYLSTHTESYDRVKSELQQAFPTADDVRLGHRLNSCRYLRACIEESLRLSPPVGGAPWRRVVSDGLLVDGQSIPAGCDVGTSVYALHHNSAYFKAPFVFRPSRWLTDSGAQGRESRDIRLAQSAFAPFSIGPRSCLGKGMAYAELTLVLATLLSKYDMRAAEGPMRGIGGGRVGAPWGRHRENEFQLTGHVTSAKTGPYVEFKKS</sequence>
<organism>
    <name type="scientific">Alternaria alternata</name>
    <name type="common">Alternaria rot fungus</name>
    <name type="synonym">Torula alternata</name>
    <dbReference type="NCBI Taxonomy" id="5599"/>
    <lineage>
        <taxon>Eukaryota</taxon>
        <taxon>Fungi</taxon>
        <taxon>Dikarya</taxon>
        <taxon>Ascomycota</taxon>
        <taxon>Pezizomycotina</taxon>
        <taxon>Dothideomycetes</taxon>
        <taxon>Pleosporomycetidae</taxon>
        <taxon>Pleosporales</taxon>
        <taxon>Pleosporineae</taxon>
        <taxon>Pleosporaceae</taxon>
        <taxon>Alternaria</taxon>
        <taxon>Alternaria sect. Alternaria</taxon>
        <taxon>Alternaria alternata complex</taxon>
    </lineage>
</organism>
<feature type="chain" id="PRO_0000444820" description="Cytochrome P450 monooxygenase AKT7">
    <location>
        <begin position="1"/>
        <end position="522"/>
    </location>
</feature>
<feature type="transmembrane region" description="Helical" evidence="2">
    <location>
        <begin position="10"/>
        <end position="30"/>
    </location>
</feature>
<feature type="binding site" description="axial binding residue" evidence="1">
    <location>
        <position position="452"/>
    </location>
    <ligand>
        <name>heme</name>
        <dbReference type="ChEBI" id="CHEBI:30413"/>
    </ligand>
    <ligandPart>
        <name>Fe</name>
        <dbReference type="ChEBI" id="CHEBI:18248"/>
    </ligandPart>
</feature>
<protein>
    <recommendedName>
        <fullName evidence="8">Cytochrome P450 monooxygenase AKT7</fullName>
        <ecNumber evidence="10">1.-.-.-</ecNumber>
    </recommendedName>
    <alternativeName>
        <fullName evidence="8">AK-toxin biosynthesis protein 7</fullName>
    </alternativeName>
</protein>
<comment type="function">
    <text evidence="3 4 5 6 7">Cytochrome P450 monooxygenase; part of the gene clusters that mediate the biosynthesis of the host-selective toxins (HSTs) AK-toxins responsible for Japanese pear black spot disease by the Japanese pear pathotype (PubMed:24611558). AK-toxins are esters of 9,10-epoxy 8-hydroxy 9-methyldecatrienoic acid (EDA) (PubMed:22846083). On cellular level, AK-toxins affect plasma membrane of susceptible cells and cause a sudden increase in loss of K(+) after a few minutes of toxin treatment (PubMed:22846083). The acyl-CoA ligase AKT1, the hydrolase AKT2 and enoyl-CoA hydratase AKT3 are all involved in the biosynthesis of the AK-, AF- and ACT-toxin common 9,10-epoxy-8-hydroxy-9-methyl-decatrienoic acid (EDA) structural moiety (PubMed:10432635, PubMed:10975654, PubMed:22846083). Part of the EDA biosynthesis occurs in the peroxisome since these 3 enzymes are localized in peroxisomes (PubMed:20348386). The exact roles of the 3 enzymes, as well as of additional AK-toxin clusters enzymes, including AKT4, AKT6 and AKTS1, have still to be elucidated (PubMed:10432635, PubMed:10975654, PubMed:22846083). The Cytochrome P450 monooxygenase AKT7 on the other side functions to limit production of EDA and AK-toxin, probably via the catalysis of a side reaction of EDA or its precursor (PubMed:24611558).</text>
</comment>
<comment type="cofactor">
    <cofactor evidence="1">
        <name>heme</name>
        <dbReference type="ChEBI" id="CHEBI:30413"/>
    </cofactor>
</comment>
<comment type="pathway">
    <text evidence="6">Mycotoxin biosynthesis.</text>
</comment>
<comment type="subcellular location">
    <subcellularLocation>
        <location evidence="2">Membrane</location>
        <topology evidence="2">Single-pass membrane protein</topology>
    </subcellularLocation>
</comment>
<comment type="disruption phenotype">
    <text evidence="6">Increases the production of AK-toxin I and does not affect the virulence to Japanese pear leaves.</text>
</comment>
<comment type="miscellaneous">
    <text evidence="4">Gene clusters encoding host-selective toxins (HSTs) are localized on conditionally dispensable chromosomes (CDCs), also called supernumerary chromosomes, where they are present in multiple copies (PubMed:10975654). The CDCs are not essential for saprophytic growth but controls host-selective pathogenicity (PubMed:10975654).</text>
</comment>
<comment type="similarity">
    <text evidence="9">Belongs to the cytochrome P450 family.</text>
</comment>
<evidence type="ECO:0000250" key="1">
    <source>
        <dbReference type="UniProtKB" id="P04798"/>
    </source>
</evidence>
<evidence type="ECO:0000255" key="2"/>
<evidence type="ECO:0000269" key="3">
    <source>
    </source>
</evidence>
<evidence type="ECO:0000269" key="4">
    <source>
    </source>
</evidence>
<evidence type="ECO:0000269" key="5">
    <source>
    </source>
</evidence>
<evidence type="ECO:0000269" key="6">
    <source>
    </source>
</evidence>
<evidence type="ECO:0000303" key="7">
    <source>
    </source>
</evidence>
<evidence type="ECO:0000303" key="8">
    <source>
    </source>
</evidence>
<evidence type="ECO:0000305" key="9"/>
<evidence type="ECO:0000305" key="10">
    <source>
    </source>
</evidence>
<proteinExistence type="inferred from homology"/>
<accession>V5XZS6</accession>
<dbReference type="EC" id="1.-.-.-" evidence="10"/>
<dbReference type="EMBL" id="AB872924">
    <property type="protein sequence ID" value="BAO10618.1"/>
    <property type="molecule type" value="Genomic_DNA"/>
</dbReference>
<dbReference type="SMR" id="V5XZS6"/>
<dbReference type="VEuPathDB" id="FungiDB:CC77DRAFT_1010772"/>
<dbReference type="PHI-base" id="PHI:4194"/>
<dbReference type="GO" id="GO:0016020">
    <property type="term" value="C:membrane"/>
    <property type="evidence" value="ECO:0007669"/>
    <property type="project" value="UniProtKB-SubCell"/>
</dbReference>
<dbReference type="GO" id="GO:0020037">
    <property type="term" value="F:heme binding"/>
    <property type="evidence" value="ECO:0007669"/>
    <property type="project" value="InterPro"/>
</dbReference>
<dbReference type="GO" id="GO:0005506">
    <property type="term" value="F:iron ion binding"/>
    <property type="evidence" value="ECO:0007669"/>
    <property type="project" value="InterPro"/>
</dbReference>
<dbReference type="GO" id="GO:0004497">
    <property type="term" value="F:monooxygenase activity"/>
    <property type="evidence" value="ECO:0007669"/>
    <property type="project" value="UniProtKB-KW"/>
</dbReference>
<dbReference type="GO" id="GO:0016705">
    <property type="term" value="F:oxidoreductase activity, acting on paired donors, with incorporation or reduction of molecular oxygen"/>
    <property type="evidence" value="ECO:0007669"/>
    <property type="project" value="InterPro"/>
</dbReference>
<dbReference type="CDD" id="cd11061">
    <property type="entry name" value="CYP67-like"/>
    <property type="match status" value="1"/>
</dbReference>
<dbReference type="FunFam" id="1.10.630.10:FF:000063">
    <property type="entry name" value="Cytochrome P450 monooxygenase"/>
    <property type="match status" value="1"/>
</dbReference>
<dbReference type="Gene3D" id="1.10.630.10">
    <property type="entry name" value="Cytochrome P450"/>
    <property type="match status" value="1"/>
</dbReference>
<dbReference type="InterPro" id="IPR001128">
    <property type="entry name" value="Cyt_P450"/>
</dbReference>
<dbReference type="InterPro" id="IPR017972">
    <property type="entry name" value="Cyt_P450_CS"/>
</dbReference>
<dbReference type="InterPro" id="IPR002401">
    <property type="entry name" value="Cyt_P450_E_grp-I"/>
</dbReference>
<dbReference type="InterPro" id="IPR036396">
    <property type="entry name" value="Cyt_P450_sf"/>
</dbReference>
<dbReference type="InterPro" id="IPR050121">
    <property type="entry name" value="Cytochrome_P450_monoxygenase"/>
</dbReference>
<dbReference type="PANTHER" id="PTHR24305">
    <property type="entry name" value="CYTOCHROME P450"/>
    <property type="match status" value="1"/>
</dbReference>
<dbReference type="PANTHER" id="PTHR24305:SF237">
    <property type="entry name" value="CYTOCHROME P450 MONOOXYGENASE ATNE-RELATED"/>
    <property type="match status" value="1"/>
</dbReference>
<dbReference type="Pfam" id="PF00067">
    <property type="entry name" value="p450"/>
    <property type="match status" value="1"/>
</dbReference>
<dbReference type="PRINTS" id="PR00463">
    <property type="entry name" value="EP450I"/>
</dbReference>
<dbReference type="PRINTS" id="PR00385">
    <property type="entry name" value="P450"/>
</dbReference>
<dbReference type="SUPFAM" id="SSF48264">
    <property type="entry name" value="Cytochrome P450"/>
    <property type="match status" value="1"/>
</dbReference>
<dbReference type="PROSITE" id="PS00086">
    <property type="entry name" value="CYTOCHROME_P450"/>
    <property type="match status" value="1"/>
</dbReference>
<keyword id="KW-0349">Heme</keyword>
<keyword id="KW-0408">Iron</keyword>
<keyword id="KW-0472">Membrane</keyword>
<keyword id="KW-0479">Metal-binding</keyword>
<keyword id="KW-0503">Monooxygenase</keyword>
<keyword id="KW-0560">Oxidoreductase</keyword>
<keyword id="KW-0812">Transmembrane</keyword>
<keyword id="KW-1133">Transmembrane helix</keyword>